<name>MNMA_MYCS5</name>
<organism>
    <name type="scientific">Mycoplasmopsis synoviae (strain 53)</name>
    <name type="common">Mycoplasma synoviae</name>
    <dbReference type="NCBI Taxonomy" id="262723"/>
    <lineage>
        <taxon>Bacteria</taxon>
        <taxon>Bacillati</taxon>
        <taxon>Mycoplasmatota</taxon>
        <taxon>Mycoplasmoidales</taxon>
        <taxon>Metamycoplasmataceae</taxon>
        <taxon>Mycoplasmopsis</taxon>
    </lineage>
</organism>
<dbReference type="EC" id="2.8.1.13" evidence="1"/>
<dbReference type="EMBL" id="AE017245">
    <property type="protein sequence ID" value="AAZ43787.1"/>
    <property type="molecule type" value="Genomic_DNA"/>
</dbReference>
<dbReference type="RefSeq" id="WP_011283518.1">
    <property type="nucleotide sequence ID" value="NC_007294.1"/>
</dbReference>
<dbReference type="SMR" id="Q4A634"/>
<dbReference type="STRING" id="262723.MS53_0375"/>
<dbReference type="KEGG" id="msy:MS53_0375"/>
<dbReference type="eggNOG" id="COG0482">
    <property type="taxonomic scope" value="Bacteria"/>
</dbReference>
<dbReference type="HOGENOM" id="CLU_035188_1_0_14"/>
<dbReference type="OrthoDB" id="9800696at2"/>
<dbReference type="Proteomes" id="UP000000549">
    <property type="component" value="Chromosome"/>
</dbReference>
<dbReference type="GO" id="GO:0005737">
    <property type="term" value="C:cytoplasm"/>
    <property type="evidence" value="ECO:0007669"/>
    <property type="project" value="UniProtKB-SubCell"/>
</dbReference>
<dbReference type="GO" id="GO:0005524">
    <property type="term" value="F:ATP binding"/>
    <property type="evidence" value="ECO:0007669"/>
    <property type="project" value="UniProtKB-KW"/>
</dbReference>
<dbReference type="GO" id="GO:0000049">
    <property type="term" value="F:tRNA binding"/>
    <property type="evidence" value="ECO:0007669"/>
    <property type="project" value="UniProtKB-KW"/>
</dbReference>
<dbReference type="GO" id="GO:0103016">
    <property type="term" value="F:tRNA-uridine 2-sulfurtransferase activity"/>
    <property type="evidence" value="ECO:0007669"/>
    <property type="project" value="UniProtKB-EC"/>
</dbReference>
<dbReference type="GO" id="GO:0002143">
    <property type="term" value="P:tRNA wobble position uridine thiolation"/>
    <property type="evidence" value="ECO:0007669"/>
    <property type="project" value="TreeGrafter"/>
</dbReference>
<dbReference type="CDD" id="cd01998">
    <property type="entry name" value="MnmA_TRMU-like"/>
    <property type="match status" value="1"/>
</dbReference>
<dbReference type="FunFam" id="2.30.30.280:FF:000001">
    <property type="entry name" value="tRNA-specific 2-thiouridylase MnmA"/>
    <property type="match status" value="1"/>
</dbReference>
<dbReference type="FunFam" id="2.40.30.10:FF:000023">
    <property type="entry name" value="tRNA-specific 2-thiouridylase MnmA"/>
    <property type="match status" value="1"/>
</dbReference>
<dbReference type="FunFam" id="3.40.50.620:FF:000115">
    <property type="entry name" value="tRNA-specific 2-thiouridylase MnmA"/>
    <property type="match status" value="1"/>
</dbReference>
<dbReference type="Gene3D" id="2.30.30.280">
    <property type="entry name" value="Adenine nucleotide alpha hydrolases-like domains"/>
    <property type="match status" value="1"/>
</dbReference>
<dbReference type="Gene3D" id="3.40.50.620">
    <property type="entry name" value="HUPs"/>
    <property type="match status" value="1"/>
</dbReference>
<dbReference type="Gene3D" id="2.40.30.10">
    <property type="entry name" value="Translation factors"/>
    <property type="match status" value="1"/>
</dbReference>
<dbReference type="HAMAP" id="MF_00144">
    <property type="entry name" value="tRNA_thiouridyl_MnmA"/>
    <property type="match status" value="1"/>
</dbReference>
<dbReference type="InterPro" id="IPR004506">
    <property type="entry name" value="MnmA-like"/>
</dbReference>
<dbReference type="InterPro" id="IPR046885">
    <property type="entry name" value="MnmA-like_C"/>
</dbReference>
<dbReference type="InterPro" id="IPR046884">
    <property type="entry name" value="MnmA-like_central"/>
</dbReference>
<dbReference type="InterPro" id="IPR023382">
    <property type="entry name" value="MnmA-like_central_sf"/>
</dbReference>
<dbReference type="InterPro" id="IPR014729">
    <property type="entry name" value="Rossmann-like_a/b/a_fold"/>
</dbReference>
<dbReference type="NCBIfam" id="NF001138">
    <property type="entry name" value="PRK00143.1"/>
    <property type="match status" value="1"/>
</dbReference>
<dbReference type="NCBIfam" id="TIGR00420">
    <property type="entry name" value="trmU"/>
    <property type="match status" value="1"/>
</dbReference>
<dbReference type="PANTHER" id="PTHR11933:SF5">
    <property type="entry name" value="MITOCHONDRIAL TRNA-SPECIFIC 2-THIOURIDYLASE 1"/>
    <property type="match status" value="1"/>
</dbReference>
<dbReference type="PANTHER" id="PTHR11933">
    <property type="entry name" value="TRNA 5-METHYLAMINOMETHYL-2-THIOURIDYLATE -METHYLTRANSFERASE"/>
    <property type="match status" value="1"/>
</dbReference>
<dbReference type="Pfam" id="PF03054">
    <property type="entry name" value="tRNA_Me_trans"/>
    <property type="match status" value="1"/>
</dbReference>
<dbReference type="Pfam" id="PF20258">
    <property type="entry name" value="tRNA_Me_trans_C"/>
    <property type="match status" value="1"/>
</dbReference>
<dbReference type="Pfam" id="PF20259">
    <property type="entry name" value="tRNA_Me_trans_M"/>
    <property type="match status" value="1"/>
</dbReference>
<dbReference type="SUPFAM" id="SSF52402">
    <property type="entry name" value="Adenine nucleotide alpha hydrolases-like"/>
    <property type="match status" value="1"/>
</dbReference>
<evidence type="ECO:0000255" key="1">
    <source>
        <dbReference type="HAMAP-Rule" id="MF_00144"/>
    </source>
</evidence>
<accession>Q4A634</accession>
<gene>
    <name evidence="1" type="primary">mnmA</name>
    <name type="ordered locus">MS53_0375</name>
</gene>
<proteinExistence type="inferred from homology"/>
<comment type="function">
    <text evidence="1">Catalyzes the 2-thiolation of uridine at the wobble position (U34) of tRNA, leading to the formation of s(2)U34.</text>
</comment>
<comment type="catalytic activity">
    <reaction evidence="1">
        <text>S-sulfanyl-L-cysteinyl-[protein] + uridine(34) in tRNA + AH2 + ATP = 2-thiouridine(34) in tRNA + L-cysteinyl-[protein] + A + AMP + diphosphate + H(+)</text>
        <dbReference type="Rhea" id="RHEA:47032"/>
        <dbReference type="Rhea" id="RHEA-COMP:10131"/>
        <dbReference type="Rhea" id="RHEA-COMP:11726"/>
        <dbReference type="Rhea" id="RHEA-COMP:11727"/>
        <dbReference type="Rhea" id="RHEA-COMP:11728"/>
        <dbReference type="ChEBI" id="CHEBI:13193"/>
        <dbReference type="ChEBI" id="CHEBI:15378"/>
        <dbReference type="ChEBI" id="CHEBI:17499"/>
        <dbReference type="ChEBI" id="CHEBI:29950"/>
        <dbReference type="ChEBI" id="CHEBI:30616"/>
        <dbReference type="ChEBI" id="CHEBI:33019"/>
        <dbReference type="ChEBI" id="CHEBI:61963"/>
        <dbReference type="ChEBI" id="CHEBI:65315"/>
        <dbReference type="ChEBI" id="CHEBI:87170"/>
        <dbReference type="ChEBI" id="CHEBI:456215"/>
        <dbReference type="EC" id="2.8.1.13"/>
    </reaction>
</comment>
<comment type="subcellular location">
    <subcellularLocation>
        <location evidence="1">Cytoplasm</location>
    </subcellularLocation>
</comment>
<comment type="similarity">
    <text evidence="1">Belongs to the MnmA/TRMU family.</text>
</comment>
<sequence>MQNNKKTVVVGLSGGVDSSVAAYLLKKNYNVIGLFMRNWDSLINNDYLGNREINNDICPQELDYKDAQEIARQLDIPLYRVDFVKEYWDYVFENFISEYKKGRTPNPDILCNKYIKFDLFAKHAFNELKTDYIATGHYAKMKNGELYRASDKNKDQSYFLSQLSKEQLKKVLFPLENLTKDEIRKIAREQNLITAAKKDSTGICFIGERKFAKFLQNYIPAKKGNVLDITNQKIVGEHSGCFYYTIGQRKGLNLGGNKESYYVCGKNVAENIIYVAPSSRPEFLESNSLLASNLNLNTNNFNKKNLSAKFRYRQEDSKVKVEFLENNFVKVYYDKAQAITPGQQVVFYDGEKCIGGAVIEEIYLNDKKLTYL</sequence>
<protein>
    <recommendedName>
        <fullName evidence="1">tRNA-specific 2-thiouridylase MnmA</fullName>
        <ecNumber evidence="1">2.8.1.13</ecNumber>
    </recommendedName>
</protein>
<feature type="chain" id="PRO_0000349709" description="tRNA-specific 2-thiouridylase MnmA">
    <location>
        <begin position="1"/>
        <end position="372"/>
    </location>
</feature>
<feature type="region of interest" description="Interaction with target base in tRNA" evidence="1">
    <location>
        <begin position="106"/>
        <end position="108"/>
    </location>
</feature>
<feature type="region of interest" description="Interaction with tRNA" evidence="1">
    <location>
        <begin position="154"/>
        <end position="156"/>
    </location>
</feature>
<feature type="region of interest" description="Interaction with tRNA" evidence="1">
    <location>
        <begin position="311"/>
        <end position="312"/>
    </location>
</feature>
<feature type="active site" description="Nucleophile" evidence="1">
    <location>
        <position position="111"/>
    </location>
</feature>
<feature type="active site" description="Cysteine persulfide intermediate" evidence="1">
    <location>
        <position position="204"/>
    </location>
</feature>
<feature type="binding site" evidence="1">
    <location>
        <begin position="11"/>
        <end position="18"/>
    </location>
    <ligand>
        <name>ATP</name>
        <dbReference type="ChEBI" id="CHEBI:30616"/>
    </ligand>
</feature>
<feature type="binding site" evidence="1">
    <location>
        <position position="36"/>
    </location>
    <ligand>
        <name>ATP</name>
        <dbReference type="ChEBI" id="CHEBI:30616"/>
    </ligand>
</feature>
<feature type="binding site" evidence="1">
    <location>
        <position position="136"/>
    </location>
    <ligand>
        <name>ATP</name>
        <dbReference type="ChEBI" id="CHEBI:30616"/>
    </ligand>
</feature>
<feature type="site" description="Interaction with tRNA" evidence="1">
    <location>
        <position position="137"/>
    </location>
</feature>
<feature type="site" description="Interaction with tRNA" evidence="1">
    <location>
        <position position="343"/>
    </location>
</feature>
<feature type="disulfide bond" description="Alternate" evidence="1">
    <location>
        <begin position="111"/>
        <end position="204"/>
    </location>
</feature>
<keyword id="KW-0067">ATP-binding</keyword>
<keyword id="KW-0963">Cytoplasm</keyword>
<keyword id="KW-1015">Disulfide bond</keyword>
<keyword id="KW-0547">Nucleotide-binding</keyword>
<keyword id="KW-1185">Reference proteome</keyword>
<keyword id="KW-0694">RNA-binding</keyword>
<keyword id="KW-0808">Transferase</keyword>
<keyword id="KW-0819">tRNA processing</keyword>
<keyword id="KW-0820">tRNA-binding</keyword>
<reference key="1">
    <citation type="journal article" date="2005" name="J. Bacteriol.">
        <title>Swine and poultry pathogens: the complete genome sequences of two strains of Mycoplasma hyopneumoniae and a strain of Mycoplasma synoviae.</title>
        <authorList>
            <person name="Vasconcelos A.T.R."/>
            <person name="Ferreira H.B."/>
            <person name="Bizarro C.V."/>
            <person name="Bonatto S.L."/>
            <person name="Carvalho M.O."/>
            <person name="Pinto P.M."/>
            <person name="Almeida D.F."/>
            <person name="Almeida L.G.P."/>
            <person name="Almeida R."/>
            <person name="Alves-Junior L."/>
            <person name="Assuncao E.N."/>
            <person name="Azevedo V.A.C."/>
            <person name="Bogo M.R."/>
            <person name="Brigido M.M."/>
            <person name="Brocchi M."/>
            <person name="Burity H.A."/>
            <person name="Camargo A.A."/>
            <person name="Camargo S.S."/>
            <person name="Carepo M.S."/>
            <person name="Carraro D.M."/>
            <person name="de Mattos Cascardo J.C."/>
            <person name="Castro L.A."/>
            <person name="Cavalcanti G."/>
            <person name="Chemale G."/>
            <person name="Collevatti R.G."/>
            <person name="Cunha C.W."/>
            <person name="Dallagiovanna B."/>
            <person name="Dambros B.P."/>
            <person name="Dellagostin O.A."/>
            <person name="Falcao C."/>
            <person name="Fantinatti-Garboggini F."/>
            <person name="Felipe M.S.S."/>
            <person name="Fiorentin L."/>
            <person name="Franco G.R."/>
            <person name="Freitas N.S.A."/>
            <person name="Frias D."/>
            <person name="Grangeiro T.B."/>
            <person name="Grisard E.C."/>
            <person name="Guimaraes C.T."/>
            <person name="Hungria M."/>
            <person name="Jardim S.N."/>
            <person name="Krieger M.A."/>
            <person name="Laurino J.P."/>
            <person name="Lima L.F.A."/>
            <person name="Lopes M.I."/>
            <person name="Loreto E.L.S."/>
            <person name="Madeira H.M.F."/>
            <person name="Manfio G.P."/>
            <person name="Maranhao A.Q."/>
            <person name="Martinkovics C.T."/>
            <person name="Medeiros S.R.B."/>
            <person name="Moreira M.A.M."/>
            <person name="Neiva M."/>
            <person name="Ramalho-Neto C.E."/>
            <person name="Nicolas M.F."/>
            <person name="Oliveira S.C."/>
            <person name="Paixao R.F.C."/>
            <person name="Pedrosa F.O."/>
            <person name="Pena S.D.J."/>
            <person name="Pereira M."/>
            <person name="Pereira-Ferrari L."/>
            <person name="Piffer I."/>
            <person name="Pinto L.S."/>
            <person name="Potrich D.P."/>
            <person name="Salim A.C.M."/>
            <person name="Santos F.R."/>
            <person name="Schmitt R."/>
            <person name="Schneider M.P.C."/>
            <person name="Schrank A."/>
            <person name="Schrank I.S."/>
            <person name="Schuck A.F."/>
            <person name="Seuanez H.N."/>
            <person name="Silva D.W."/>
            <person name="Silva R."/>
            <person name="Silva S.C."/>
            <person name="Soares C.M.A."/>
            <person name="Souza K.R.L."/>
            <person name="Souza R.C."/>
            <person name="Staats C.C."/>
            <person name="Steffens M.B.R."/>
            <person name="Teixeira S.M.R."/>
            <person name="Urmenyi T.P."/>
            <person name="Vainstein M.H."/>
            <person name="Zuccherato L.W."/>
            <person name="Simpson A.J.G."/>
            <person name="Zaha A."/>
        </authorList>
    </citation>
    <scope>NUCLEOTIDE SEQUENCE [LARGE SCALE GENOMIC DNA]</scope>
    <source>
        <strain>53</strain>
    </source>
</reference>